<accession>A5USH2</accession>
<evidence type="ECO:0000255" key="1">
    <source>
        <dbReference type="HAMAP-Rule" id="MF_01307"/>
    </source>
</evidence>
<evidence type="ECO:0000305" key="2"/>
<proteinExistence type="inferred from homology"/>
<name>RS5_ROSS1</name>
<organism>
    <name type="scientific">Roseiflexus sp. (strain RS-1)</name>
    <dbReference type="NCBI Taxonomy" id="357808"/>
    <lineage>
        <taxon>Bacteria</taxon>
        <taxon>Bacillati</taxon>
        <taxon>Chloroflexota</taxon>
        <taxon>Chloroflexia</taxon>
        <taxon>Chloroflexales</taxon>
        <taxon>Roseiflexineae</taxon>
        <taxon>Roseiflexaceae</taxon>
        <taxon>Roseiflexus</taxon>
    </lineage>
</organism>
<comment type="function">
    <text evidence="1">With S4 and S12 plays an important role in translational accuracy.</text>
</comment>
<comment type="function">
    <text evidence="1">Located at the back of the 30S subunit body where it stabilizes the conformation of the head with respect to the body.</text>
</comment>
<comment type="subunit">
    <text evidence="1">Part of the 30S ribosomal subunit. Contacts proteins S4 and S8.</text>
</comment>
<comment type="domain">
    <text>The N-terminal domain interacts with the head of the 30S subunit; the C-terminal domain interacts with the body and contacts protein S4. The interaction surface between S4 and S5 is involved in control of translational fidelity.</text>
</comment>
<comment type="similarity">
    <text evidence="1">Belongs to the universal ribosomal protein uS5 family.</text>
</comment>
<sequence length="180" mass="19586">MIKRRINADELELEERVVQINRVSKVVKGGRRFSFSTVVVVGDGKGHVGIGMGKAAEVPEAIRKGVEAAKKNLIRVPLSGTTIPHEVQMEFAASKVRLLPAAPGTGVIAGRGVRPVLEMAGIKDVLSKRYGSNNPINVVKATFKALSALTSLEEQARMRGMTPRELNLRRMRREPAPQEA</sequence>
<protein>
    <recommendedName>
        <fullName evidence="1">Small ribosomal subunit protein uS5</fullName>
    </recommendedName>
    <alternativeName>
        <fullName evidence="2">30S ribosomal protein S5</fullName>
    </alternativeName>
</protein>
<keyword id="KW-0687">Ribonucleoprotein</keyword>
<keyword id="KW-0689">Ribosomal protein</keyword>
<keyword id="KW-0694">RNA-binding</keyword>
<keyword id="KW-0699">rRNA-binding</keyword>
<dbReference type="EMBL" id="CP000686">
    <property type="protein sequence ID" value="ABQ89575.1"/>
    <property type="molecule type" value="Genomic_DNA"/>
</dbReference>
<dbReference type="RefSeq" id="WP_011955928.1">
    <property type="nucleotide sequence ID" value="NC_009523.1"/>
</dbReference>
<dbReference type="SMR" id="A5USH2"/>
<dbReference type="STRING" id="357808.RoseRS_1168"/>
<dbReference type="KEGG" id="rrs:RoseRS_1168"/>
<dbReference type="eggNOG" id="COG0098">
    <property type="taxonomic scope" value="Bacteria"/>
</dbReference>
<dbReference type="HOGENOM" id="CLU_065898_2_2_0"/>
<dbReference type="OrthoDB" id="9809045at2"/>
<dbReference type="Proteomes" id="UP000006554">
    <property type="component" value="Chromosome"/>
</dbReference>
<dbReference type="GO" id="GO:0015935">
    <property type="term" value="C:small ribosomal subunit"/>
    <property type="evidence" value="ECO:0007669"/>
    <property type="project" value="InterPro"/>
</dbReference>
<dbReference type="GO" id="GO:0019843">
    <property type="term" value="F:rRNA binding"/>
    <property type="evidence" value="ECO:0007669"/>
    <property type="project" value="UniProtKB-UniRule"/>
</dbReference>
<dbReference type="GO" id="GO:0003735">
    <property type="term" value="F:structural constituent of ribosome"/>
    <property type="evidence" value="ECO:0007669"/>
    <property type="project" value="InterPro"/>
</dbReference>
<dbReference type="GO" id="GO:0006412">
    <property type="term" value="P:translation"/>
    <property type="evidence" value="ECO:0007669"/>
    <property type="project" value="UniProtKB-UniRule"/>
</dbReference>
<dbReference type="FunFam" id="3.30.160.20:FF:000001">
    <property type="entry name" value="30S ribosomal protein S5"/>
    <property type="match status" value="1"/>
</dbReference>
<dbReference type="FunFam" id="3.30.230.10:FF:000002">
    <property type="entry name" value="30S ribosomal protein S5"/>
    <property type="match status" value="1"/>
</dbReference>
<dbReference type="Gene3D" id="3.30.160.20">
    <property type="match status" value="1"/>
</dbReference>
<dbReference type="Gene3D" id="3.30.230.10">
    <property type="match status" value="1"/>
</dbReference>
<dbReference type="HAMAP" id="MF_01307_B">
    <property type="entry name" value="Ribosomal_uS5_B"/>
    <property type="match status" value="1"/>
</dbReference>
<dbReference type="InterPro" id="IPR020568">
    <property type="entry name" value="Ribosomal_Su5_D2-typ_SF"/>
</dbReference>
<dbReference type="InterPro" id="IPR000851">
    <property type="entry name" value="Ribosomal_uS5"/>
</dbReference>
<dbReference type="InterPro" id="IPR005712">
    <property type="entry name" value="Ribosomal_uS5_bac-type"/>
</dbReference>
<dbReference type="InterPro" id="IPR005324">
    <property type="entry name" value="Ribosomal_uS5_C"/>
</dbReference>
<dbReference type="InterPro" id="IPR013810">
    <property type="entry name" value="Ribosomal_uS5_N"/>
</dbReference>
<dbReference type="InterPro" id="IPR018192">
    <property type="entry name" value="Ribosomal_uS5_N_CS"/>
</dbReference>
<dbReference type="InterPro" id="IPR014721">
    <property type="entry name" value="Ribsml_uS5_D2-typ_fold_subgr"/>
</dbReference>
<dbReference type="NCBIfam" id="TIGR01021">
    <property type="entry name" value="rpsE_bact"/>
    <property type="match status" value="1"/>
</dbReference>
<dbReference type="PANTHER" id="PTHR48277">
    <property type="entry name" value="MITOCHONDRIAL RIBOSOMAL PROTEIN S5"/>
    <property type="match status" value="1"/>
</dbReference>
<dbReference type="PANTHER" id="PTHR48277:SF1">
    <property type="entry name" value="MITOCHONDRIAL RIBOSOMAL PROTEIN S5"/>
    <property type="match status" value="1"/>
</dbReference>
<dbReference type="Pfam" id="PF00333">
    <property type="entry name" value="Ribosomal_S5"/>
    <property type="match status" value="1"/>
</dbReference>
<dbReference type="Pfam" id="PF03719">
    <property type="entry name" value="Ribosomal_S5_C"/>
    <property type="match status" value="1"/>
</dbReference>
<dbReference type="SUPFAM" id="SSF54768">
    <property type="entry name" value="dsRNA-binding domain-like"/>
    <property type="match status" value="1"/>
</dbReference>
<dbReference type="SUPFAM" id="SSF54211">
    <property type="entry name" value="Ribosomal protein S5 domain 2-like"/>
    <property type="match status" value="1"/>
</dbReference>
<dbReference type="PROSITE" id="PS00585">
    <property type="entry name" value="RIBOSOMAL_S5"/>
    <property type="match status" value="1"/>
</dbReference>
<dbReference type="PROSITE" id="PS50881">
    <property type="entry name" value="S5_DSRBD"/>
    <property type="match status" value="1"/>
</dbReference>
<feature type="chain" id="PRO_0000323187" description="Small ribosomal subunit protein uS5">
    <location>
        <begin position="1"/>
        <end position="180"/>
    </location>
</feature>
<feature type="domain" description="S5 DRBM" evidence="1">
    <location>
        <begin position="13"/>
        <end position="76"/>
    </location>
</feature>
<reference key="1">
    <citation type="submission" date="2007-04" db="EMBL/GenBank/DDBJ databases">
        <title>Complete sequence of Roseiflexus sp. RS-1.</title>
        <authorList>
            <consortium name="US DOE Joint Genome Institute"/>
            <person name="Copeland A."/>
            <person name="Lucas S."/>
            <person name="Lapidus A."/>
            <person name="Barry K."/>
            <person name="Detter J.C."/>
            <person name="Glavina del Rio T."/>
            <person name="Hammon N."/>
            <person name="Israni S."/>
            <person name="Dalin E."/>
            <person name="Tice H."/>
            <person name="Pitluck S."/>
            <person name="Chertkov O."/>
            <person name="Brettin T."/>
            <person name="Bruce D."/>
            <person name="Han C."/>
            <person name="Schmutz J."/>
            <person name="Larimer F."/>
            <person name="Land M."/>
            <person name="Hauser L."/>
            <person name="Kyrpides N."/>
            <person name="Mikhailova N."/>
            <person name="Bryant D.A."/>
            <person name="Richardson P."/>
        </authorList>
    </citation>
    <scope>NUCLEOTIDE SEQUENCE [LARGE SCALE GENOMIC DNA]</scope>
    <source>
        <strain>RS-1</strain>
    </source>
</reference>
<gene>
    <name evidence="1" type="primary">rpsE</name>
    <name type="ordered locus">RoseRS_1168</name>
</gene>